<protein>
    <recommendedName>
        <fullName evidence="1">Protein translocase subunit SecY 1</fullName>
    </recommendedName>
</protein>
<keyword id="KW-1003">Cell membrane</keyword>
<keyword id="KW-0472">Membrane</keyword>
<keyword id="KW-0614">Plasmid</keyword>
<keyword id="KW-0653">Protein transport</keyword>
<keyword id="KW-0811">Translocation</keyword>
<keyword id="KW-0812">Transmembrane</keyword>
<keyword id="KW-1133">Transmembrane helix</keyword>
<keyword id="KW-0813">Transport</keyword>
<organism>
    <name type="scientific">Lactobacillus kefiranofaciens subsp. kefiranofaciens</name>
    <dbReference type="NCBI Taxonomy" id="190905"/>
    <lineage>
        <taxon>Bacteria</taxon>
        <taxon>Bacillati</taxon>
        <taxon>Bacillota</taxon>
        <taxon>Bacilli</taxon>
        <taxon>Lactobacillales</taxon>
        <taxon>Lactobacillaceae</taxon>
        <taxon>Lactobacillus</taxon>
    </lineage>
</organism>
<reference key="1">
    <citation type="journal article" date="2011" name="J. Bacteriol.">
        <title>Complete genome sequence of Lactobacillus kefiranofaciens ZW3.</title>
        <authorList>
            <person name="Wang Y."/>
            <person name="Wang J."/>
            <person name="Ahmed Z."/>
            <person name="Bai X."/>
            <person name="Wang J."/>
        </authorList>
    </citation>
    <scope>NUCLEOTIDE SEQUENCE [LARGE SCALE GENOMIC DNA]</scope>
    <source>
        <strain>CGMCC2809 / ZW3</strain>
    </source>
</reference>
<accession>F6CD01</accession>
<evidence type="ECO:0000255" key="1">
    <source>
        <dbReference type="HAMAP-Rule" id="MF_01465"/>
    </source>
</evidence>
<name>SECY1_LACKK</name>
<gene>
    <name evidence="1" type="primary">secY1</name>
    <name type="ordered locus">WANG_0015</name>
</gene>
<comment type="function">
    <text evidence="1">The central subunit of the protein translocation channel SecYEG. Consists of two halves formed by TMs 1-5 and 6-10. These two domains form a lateral gate at the front which open onto the bilayer between TMs 2 and 7, and are clamped together by SecE at the back. The channel is closed by both a pore ring composed of hydrophobic SecY resides and a short helix (helix 2A) on the extracellular side of the membrane which forms a plug. The plug probably moves laterally to allow the channel to open. The ring and the pore may move independently.</text>
</comment>
<comment type="subunit">
    <text evidence="1">Component of the Sec protein translocase complex. Heterotrimer consisting of SecY, SecE and SecG subunits. The heterotrimers can form oligomers, although 1 heterotrimer is thought to be able to translocate proteins. Interacts with the ribosome. Interacts with SecDF, and other proteins may be involved. Interacts with SecA.</text>
</comment>
<comment type="subcellular location">
    <subcellularLocation>
        <location evidence="1">Cell membrane</location>
        <topology evidence="1">Multi-pass membrane protein</topology>
    </subcellularLocation>
</comment>
<comment type="similarity">
    <text evidence="1">Belongs to the SecY/SEC61-alpha family.</text>
</comment>
<feature type="chain" id="PRO_0000414205" description="Protein translocase subunit SecY 1">
    <location>
        <begin position="1"/>
        <end position="431"/>
    </location>
</feature>
<feature type="transmembrane region" description="Helical" evidence="1">
    <location>
        <begin position="18"/>
        <end position="38"/>
    </location>
</feature>
<feature type="transmembrane region" description="Helical" evidence="1">
    <location>
        <begin position="67"/>
        <end position="87"/>
    </location>
</feature>
<feature type="transmembrane region" description="Helical" evidence="1">
    <location>
        <begin position="115"/>
        <end position="135"/>
    </location>
</feature>
<feature type="transmembrane region" description="Helical" evidence="1">
    <location>
        <begin position="150"/>
        <end position="170"/>
    </location>
</feature>
<feature type="transmembrane region" description="Helical" evidence="1">
    <location>
        <begin position="178"/>
        <end position="198"/>
    </location>
</feature>
<feature type="transmembrane region" description="Helical" evidence="1">
    <location>
        <begin position="215"/>
        <end position="235"/>
    </location>
</feature>
<feature type="transmembrane region" description="Helical" evidence="1">
    <location>
        <begin position="268"/>
        <end position="288"/>
    </location>
</feature>
<feature type="transmembrane region" description="Helical" evidence="1">
    <location>
        <begin position="312"/>
        <end position="332"/>
    </location>
</feature>
<feature type="transmembrane region" description="Helical" evidence="1">
    <location>
        <begin position="365"/>
        <end position="385"/>
    </location>
</feature>
<feature type="transmembrane region" description="Helical" evidence="1">
    <location>
        <begin position="392"/>
        <end position="412"/>
    </location>
</feature>
<dbReference type="EMBL" id="CP002764">
    <property type="protein sequence ID" value="AEG39710.1"/>
    <property type="molecule type" value="Genomic_DNA"/>
</dbReference>
<dbReference type="RefSeq" id="WP_013853513.1">
    <property type="nucleotide sequence ID" value="NC_015602.1"/>
</dbReference>
<dbReference type="SMR" id="F6CD01"/>
<dbReference type="GeneID" id="72686232"/>
<dbReference type="KEGG" id="lke:WANG_0015"/>
<dbReference type="HOGENOM" id="CLU_030313_0_1_9"/>
<dbReference type="GO" id="GO:0005886">
    <property type="term" value="C:plasma membrane"/>
    <property type="evidence" value="ECO:0007669"/>
    <property type="project" value="UniProtKB-SubCell"/>
</dbReference>
<dbReference type="GO" id="GO:0065002">
    <property type="term" value="P:intracellular protein transmembrane transport"/>
    <property type="evidence" value="ECO:0007669"/>
    <property type="project" value="UniProtKB-UniRule"/>
</dbReference>
<dbReference type="GO" id="GO:0006605">
    <property type="term" value="P:protein targeting"/>
    <property type="evidence" value="ECO:0007669"/>
    <property type="project" value="UniProtKB-UniRule"/>
</dbReference>
<dbReference type="GO" id="GO:0043952">
    <property type="term" value="P:protein transport by the Sec complex"/>
    <property type="evidence" value="ECO:0007669"/>
    <property type="project" value="UniProtKB-UniRule"/>
</dbReference>
<dbReference type="FunFam" id="1.10.3370.10:FF:000001">
    <property type="entry name" value="Preprotein translocase subunit SecY"/>
    <property type="match status" value="1"/>
</dbReference>
<dbReference type="Gene3D" id="1.10.3370.10">
    <property type="entry name" value="SecY subunit domain"/>
    <property type="match status" value="1"/>
</dbReference>
<dbReference type="HAMAP" id="MF_01465">
    <property type="entry name" value="SecY"/>
    <property type="match status" value="1"/>
</dbReference>
<dbReference type="InterPro" id="IPR026593">
    <property type="entry name" value="SecY"/>
</dbReference>
<dbReference type="InterPro" id="IPR002208">
    <property type="entry name" value="SecY/SEC61-alpha"/>
</dbReference>
<dbReference type="InterPro" id="IPR030659">
    <property type="entry name" value="SecY_CS"/>
</dbReference>
<dbReference type="InterPro" id="IPR023201">
    <property type="entry name" value="SecY_dom_sf"/>
</dbReference>
<dbReference type="NCBIfam" id="TIGR00967">
    <property type="entry name" value="3a0501s007"/>
    <property type="match status" value="1"/>
</dbReference>
<dbReference type="PANTHER" id="PTHR10906">
    <property type="entry name" value="SECY/SEC61-ALPHA FAMILY MEMBER"/>
    <property type="match status" value="1"/>
</dbReference>
<dbReference type="Pfam" id="PF00344">
    <property type="entry name" value="SecY"/>
    <property type="match status" value="1"/>
</dbReference>
<dbReference type="PIRSF" id="PIRSF004557">
    <property type="entry name" value="SecY"/>
    <property type="match status" value="1"/>
</dbReference>
<dbReference type="PRINTS" id="PR00303">
    <property type="entry name" value="SECYTRNLCASE"/>
</dbReference>
<dbReference type="SUPFAM" id="SSF103491">
    <property type="entry name" value="Preprotein translocase SecY subunit"/>
    <property type="match status" value="1"/>
</dbReference>
<dbReference type="PROSITE" id="PS00755">
    <property type="entry name" value="SECY_1"/>
    <property type="match status" value="1"/>
</dbReference>
<dbReference type="PROSITE" id="PS00756">
    <property type="entry name" value="SECY_2"/>
    <property type="match status" value="1"/>
</dbReference>
<proteinExistence type="inferred from homology"/>
<sequence length="431" mass="47691">MFSTLKNAFKDKEIRNKIYFTLFILLLYRIGANITVPGINVKAITQVAQTGLVPMLDTVSGGGLDNYSIFSLGVSPYITAQIVIQLLQMDIVPTLVEWGKQGEVGRRKTNQVTRYLTLVVAFVQSIGITLGFNALTQMGLVKNQTPQTYVEIAIIMTAGTMLLTWLGDEITDKGLGNGVSVIIFAGIIARLPSGLYQIYKEEIINNSASDRWQGILFFIAVIVAILIVTQLVTWVEQADRRIPIQYTRRATISGSESFLPLKVNVSGVIPVIFASSFIVTPATILMAFQRTQGDQQWFKVMNQIFSLQTTPGVIIYTLLIILFTFFYAFVQVNPEKLAENLQKQGAYIPSVWPGKDTQDYVSKMLIKLSTVGSIFLGLVALLPQLATNFWNLPSSIGLGGTSLLIVIGVVLELSRQINGLLMKREYVGFIR</sequence>